<accession>A7ZPM7</accession>
<reference key="1">
    <citation type="journal article" date="2008" name="J. Bacteriol.">
        <title>The pangenome structure of Escherichia coli: comparative genomic analysis of E. coli commensal and pathogenic isolates.</title>
        <authorList>
            <person name="Rasko D.A."/>
            <person name="Rosovitz M.J."/>
            <person name="Myers G.S.A."/>
            <person name="Mongodin E.F."/>
            <person name="Fricke W.F."/>
            <person name="Gajer P."/>
            <person name="Crabtree J."/>
            <person name="Sebaihia M."/>
            <person name="Thomson N.R."/>
            <person name="Chaudhuri R."/>
            <person name="Henderson I.R."/>
            <person name="Sperandio V."/>
            <person name="Ravel J."/>
        </authorList>
    </citation>
    <scope>NUCLEOTIDE SEQUENCE [LARGE SCALE GENOMIC DNA]</scope>
    <source>
        <strain>E24377A / ETEC</strain>
    </source>
</reference>
<organism>
    <name type="scientific">Escherichia coli O139:H28 (strain E24377A / ETEC)</name>
    <dbReference type="NCBI Taxonomy" id="331111"/>
    <lineage>
        <taxon>Bacteria</taxon>
        <taxon>Pseudomonadati</taxon>
        <taxon>Pseudomonadota</taxon>
        <taxon>Gammaproteobacteria</taxon>
        <taxon>Enterobacterales</taxon>
        <taxon>Enterobacteriaceae</taxon>
        <taxon>Escherichia</taxon>
    </lineage>
</organism>
<gene>
    <name evidence="1" type="primary">murR</name>
    <name type="ordered locus">EcE24377A_2713</name>
</gene>
<comment type="function">
    <text evidence="1">Represses the expression of the murPQ operon involved in the uptake and degradation of N-acetylmuramic acid (MurNAc). Binds to two adjacent inverted repeats within the operator region. MurNAc 6-phosphate, the substrate of MurQ, is the specific inducer that weakens binding of MurR to the operator.</text>
</comment>
<comment type="pathway">
    <text>Amino-sugar metabolism; N-acetylmuramate degradation [regulation].</text>
</comment>
<comment type="subunit">
    <text evidence="1">Homotetramer.</text>
</comment>
<feature type="chain" id="PRO_0000387761" description="HTH-type transcriptional regulator MurR">
    <location>
        <begin position="1"/>
        <end position="285"/>
    </location>
</feature>
<feature type="domain" description="HTH rpiR-type" evidence="1">
    <location>
        <begin position="1"/>
        <end position="77"/>
    </location>
</feature>
<feature type="domain" description="SIS" evidence="1">
    <location>
        <begin position="128"/>
        <end position="268"/>
    </location>
</feature>
<feature type="DNA-binding region" description="H-T-H motif" evidence="1">
    <location>
        <begin position="37"/>
        <end position="56"/>
    </location>
</feature>
<name>MURR_ECO24</name>
<sequence length="285" mass="31196">MLYLTKISNAGSEFTENEQKIADFLQANVSELQSVSSRQMAKQLGISQSSIVKFAQKLGAQGFTELRMALIGEYSASREKTNATALHLHSSITSDDSLEVIARKLNREKELALEQTCALFDYARLQKIIEVISKAPFIQITGLGGSALVGRDLSFKLMKIGYRVACEADTHVQATVSQALKKGDVQIAISYSGSKKEIVLCAEAARKQGATVIAITSLADSPLRRLAHFTLDTVSGETEWRSSSMSTRTAQNSVTDLLFVGLVQLNDVESLKMIQRSSELTQRLK</sequence>
<keyword id="KW-0119">Carbohydrate metabolism</keyword>
<keyword id="KW-0238">DNA-binding</keyword>
<keyword id="KW-1185">Reference proteome</keyword>
<keyword id="KW-0678">Repressor</keyword>
<keyword id="KW-0804">Transcription</keyword>
<keyword id="KW-0805">Transcription regulation</keyword>
<dbReference type="EMBL" id="CP000800">
    <property type="protein sequence ID" value="ABV19460.1"/>
    <property type="molecule type" value="Genomic_DNA"/>
</dbReference>
<dbReference type="RefSeq" id="WP_000966468.1">
    <property type="nucleotide sequence ID" value="NC_009801.1"/>
</dbReference>
<dbReference type="SMR" id="A7ZPM7"/>
<dbReference type="KEGG" id="ecw:EcE24377A_2713"/>
<dbReference type="HOGENOM" id="CLU_055769_0_2_6"/>
<dbReference type="UniPathway" id="UPA00342"/>
<dbReference type="Proteomes" id="UP000001122">
    <property type="component" value="Chromosome"/>
</dbReference>
<dbReference type="GO" id="GO:0097367">
    <property type="term" value="F:carbohydrate derivative binding"/>
    <property type="evidence" value="ECO:0007669"/>
    <property type="project" value="InterPro"/>
</dbReference>
<dbReference type="GO" id="GO:0003677">
    <property type="term" value="F:DNA binding"/>
    <property type="evidence" value="ECO:0007669"/>
    <property type="project" value="UniProtKB-KW"/>
</dbReference>
<dbReference type="GO" id="GO:0003700">
    <property type="term" value="F:DNA-binding transcription factor activity"/>
    <property type="evidence" value="ECO:0007669"/>
    <property type="project" value="UniProtKB-UniRule"/>
</dbReference>
<dbReference type="GO" id="GO:1901135">
    <property type="term" value="P:carbohydrate derivative metabolic process"/>
    <property type="evidence" value="ECO:0007669"/>
    <property type="project" value="InterPro"/>
</dbReference>
<dbReference type="GO" id="GO:0097173">
    <property type="term" value="P:N-acetylmuramic acid catabolic process"/>
    <property type="evidence" value="ECO:0007669"/>
    <property type="project" value="UniProtKB-UniPathway"/>
</dbReference>
<dbReference type="GO" id="GO:0045892">
    <property type="term" value="P:negative regulation of DNA-templated transcription"/>
    <property type="evidence" value="ECO:0007669"/>
    <property type="project" value="UniProtKB-UniRule"/>
</dbReference>
<dbReference type="GO" id="GO:0043470">
    <property type="term" value="P:regulation of carbohydrate catabolic process"/>
    <property type="evidence" value="ECO:0007669"/>
    <property type="project" value="UniProtKB-UniRule"/>
</dbReference>
<dbReference type="CDD" id="cd05013">
    <property type="entry name" value="SIS_RpiR"/>
    <property type="match status" value="1"/>
</dbReference>
<dbReference type="FunFam" id="3.40.50.10490:FF:000028">
    <property type="entry name" value="HTH-type transcriptional regulator MurR"/>
    <property type="match status" value="1"/>
</dbReference>
<dbReference type="Gene3D" id="3.40.50.10490">
    <property type="entry name" value="Glucose-6-phosphate isomerase like protein, domain 1"/>
    <property type="match status" value="1"/>
</dbReference>
<dbReference type="Gene3D" id="1.10.10.10">
    <property type="entry name" value="Winged helix-like DNA-binding domain superfamily/Winged helix DNA-binding domain"/>
    <property type="match status" value="1"/>
</dbReference>
<dbReference type="HAMAP" id="MF_02108">
    <property type="entry name" value="HTH_type_MurR"/>
    <property type="match status" value="1"/>
</dbReference>
<dbReference type="InterPro" id="IPR009057">
    <property type="entry name" value="Homeodomain-like_sf"/>
</dbReference>
<dbReference type="InterPro" id="IPR000281">
    <property type="entry name" value="HTH_RpiR"/>
</dbReference>
<dbReference type="InterPro" id="IPR047640">
    <property type="entry name" value="RpiR-like"/>
</dbReference>
<dbReference type="InterPro" id="IPR035472">
    <property type="entry name" value="RpiR-like_SIS"/>
</dbReference>
<dbReference type="InterPro" id="IPR001347">
    <property type="entry name" value="SIS_dom"/>
</dbReference>
<dbReference type="InterPro" id="IPR046348">
    <property type="entry name" value="SIS_dom_sf"/>
</dbReference>
<dbReference type="InterPro" id="IPR022821">
    <property type="entry name" value="Tscrpt_reg_HTH_MurR"/>
</dbReference>
<dbReference type="InterPro" id="IPR036388">
    <property type="entry name" value="WH-like_DNA-bd_sf"/>
</dbReference>
<dbReference type="NCBIfam" id="NF012026">
    <property type="entry name" value="PRK15482.1"/>
    <property type="match status" value="1"/>
</dbReference>
<dbReference type="PANTHER" id="PTHR30514">
    <property type="entry name" value="GLUCOKINASE"/>
    <property type="match status" value="1"/>
</dbReference>
<dbReference type="PANTHER" id="PTHR30514:SF17">
    <property type="entry name" value="HTH-TYPE TRANSCRIPTIONAL REGULATOR MURR"/>
    <property type="match status" value="1"/>
</dbReference>
<dbReference type="Pfam" id="PF01418">
    <property type="entry name" value="HTH_6"/>
    <property type="match status" value="1"/>
</dbReference>
<dbReference type="Pfam" id="PF01380">
    <property type="entry name" value="SIS"/>
    <property type="match status" value="1"/>
</dbReference>
<dbReference type="SUPFAM" id="SSF46689">
    <property type="entry name" value="Homeodomain-like"/>
    <property type="match status" value="1"/>
</dbReference>
<dbReference type="SUPFAM" id="SSF53697">
    <property type="entry name" value="SIS domain"/>
    <property type="match status" value="1"/>
</dbReference>
<dbReference type="PROSITE" id="PS51071">
    <property type="entry name" value="HTH_RPIR"/>
    <property type="match status" value="1"/>
</dbReference>
<dbReference type="PROSITE" id="PS51464">
    <property type="entry name" value="SIS"/>
    <property type="match status" value="1"/>
</dbReference>
<protein>
    <recommendedName>
        <fullName evidence="1">HTH-type transcriptional regulator MurR</fullName>
    </recommendedName>
    <alternativeName>
        <fullName evidence="1">MurPQ operon repressor</fullName>
    </alternativeName>
</protein>
<proteinExistence type="inferred from homology"/>
<evidence type="ECO:0000255" key="1">
    <source>
        <dbReference type="HAMAP-Rule" id="MF_02108"/>
    </source>
</evidence>